<organism>
    <name type="scientific">Pyropia yezoensis</name>
    <name type="common">Susabi-nori</name>
    <name type="synonym">Porphyra yezoensis</name>
    <dbReference type="NCBI Taxonomy" id="2788"/>
    <lineage>
        <taxon>Eukaryota</taxon>
        <taxon>Rhodophyta</taxon>
        <taxon>Bangiophyceae</taxon>
        <taxon>Bangiales</taxon>
        <taxon>Bangiaceae</taxon>
        <taxon>Pyropia</taxon>
    </lineage>
</organism>
<feature type="chain" id="PRO_0000277262" description="Ribulose bisphosphate carboxylase small subunit">
    <location>
        <begin position="1"/>
        <end position="138"/>
    </location>
</feature>
<reference key="1">
    <citation type="submission" date="2003-08" db="EMBL/GenBank/DDBJ databases">
        <title>Species determination utilizing Porphyra (Rhodophyta) plastid DNA RuBisCo sequences.</title>
        <authorList>
            <person name="Kito H."/>
            <person name="Kunimoto M."/>
            <person name="Mizukami Y."/>
            <person name="Murase N."/>
            <person name="Kuroki T."/>
            <person name="Taruta M."/>
            <person name="Levine I."/>
        </authorList>
    </citation>
    <scope>NUCLEOTIDE SEQUENCE [GENOMIC DNA]</scope>
    <source>
        <strain>F6-1</strain>
        <strain>Saga-5</strain>
        <strain>Saga-5L</strain>
        <tissue>Thallus</tissue>
    </source>
</reference>
<reference key="2">
    <citation type="submission" date="2003-11" db="EMBL/GenBank/DDBJ databases">
        <title>Whole genome sequence of Porphyra yezoensis chloroplast.</title>
        <authorList>
            <person name="Kunimoto M."/>
            <person name="Morishima K."/>
            <person name="Yoshikawa M."/>
            <person name="Fukuda S."/>
            <person name="Kobayashi T."/>
            <person name="Kobayashi M."/>
            <person name="Okazaki T."/>
            <person name="Ohara I."/>
            <person name="Nakayama I."/>
        </authorList>
    </citation>
    <scope>NUCLEOTIDE SEQUENCE [LARGE SCALE GENOMIC DNA]</scope>
    <source>
        <strain>U-51</strain>
    </source>
</reference>
<dbReference type="EMBL" id="AB118574">
    <property type="protein sequence ID" value="BAC84916.1"/>
    <property type="molecule type" value="Genomic_DNA"/>
</dbReference>
<dbReference type="EMBL" id="AB118575">
    <property type="protein sequence ID" value="BAC84918.1"/>
    <property type="molecule type" value="Genomic_DNA"/>
</dbReference>
<dbReference type="EMBL" id="AB118587">
    <property type="protein sequence ID" value="BAC84942.1"/>
    <property type="molecule type" value="Genomic_DNA"/>
</dbReference>
<dbReference type="EMBL" id="AB118588">
    <property type="protein sequence ID" value="BAC84944.1"/>
    <property type="molecule type" value="Genomic_DNA"/>
</dbReference>
<dbReference type="EMBL" id="AB118589">
    <property type="protein sequence ID" value="BAC84946.1"/>
    <property type="molecule type" value="Genomic_DNA"/>
</dbReference>
<dbReference type="EMBL" id="AB118590">
    <property type="protein sequence ID" value="BAC84948.1"/>
    <property type="molecule type" value="Genomic_DNA"/>
</dbReference>
<dbReference type="EMBL" id="AP006715">
    <property type="protein sequence ID" value="BAE92351.1"/>
    <property type="molecule type" value="Genomic_DNA"/>
</dbReference>
<dbReference type="RefSeq" id="YP_536908.1">
    <property type="nucleotide sequence ID" value="NC_007932.1"/>
</dbReference>
<dbReference type="SMR" id="Q760T4"/>
<dbReference type="GeneID" id="3978793"/>
<dbReference type="GO" id="GO:0009507">
    <property type="term" value="C:chloroplast"/>
    <property type="evidence" value="ECO:0007669"/>
    <property type="project" value="UniProtKB-SubCell"/>
</dbReference>
<dbReference type="GO" id="GO:0016984">
    <property type="term" value="F:ribulose-bisphosphate carboxylase activity"/>
    <property type="evidence" value="ECO:0007669"/>
    <property type="project" value="UniProtKB-UniRule"/>
</dbReference>
<dbReference type="GO" id="GO:0019253">
    <property type="term" value="P:reductive pentose-phosphate cycle"/>
    <property type="evidence" value="ECO:0007669"/>
    <property type="project" value="UniProtKB-UniRule"/>
</dbReference>
<dbReference type="CDD" id="cd03527">
    <property type="entry name" value="RuBisCO_small"/>
    <property type="match status" value="1"/>
</dbReference>
<dbReference type="Gene3D" id="3.30.190.10">
    <property type="entry name" value="Ribulose bisphosphate carboxylase, small subunit"/>
    <property type="match status" value="1"/>
</dbReference>
<dbReference type="HAMAP" id="MF_00859">
    <property type="entry name" value="RuBisCO_S_bact"/>
    <property type="match status" value="1"/>
</dbReference>
<dbReference type="InterPro" id="IPR024681">
    <property type="entry name" value="RuBisCO_ssu"/>
</dbReference>
<dbReference type="InterPro" id="IPR000894">
    <property type="entry name" value="RuBisCO_ssu_dom"/>
</dbReference>
<dbReference type="InterPro" id="IPR036385">
    <property type="entry name" value="RuBisCO_ssu_sf"/>
</dbReference>
<dbReference type="PANTHER" id="PTHR31262">
    <property type="entry name" value="RIBULOSE BISPHOSPHATE CARBOXYLASE SMALL CHAIN 1, CHLOROPLASTIC"/>
    <property type="match status" value="1"/>
</dbReference>
<dbReference type="PANTHER" id="PTHR31262:SF23">
    <property type="entry name" value="RIBULOSE BISPHOSPHATE CARBOXYLASE SMALL SUBUNIT"/>
    <property type="match status" value="1"/>
</dbReference>
<dbReference type="Pfam" id="PF00101">
    <property type="entry name" value="RuBisCO_small"/>
    <property type="match status" value="1"/>
</dbReference>
<dbReference type="SMART" id="SM00961">
    <property type="entry name" value="RuBisCO_small"/>
    <property type="match status" value="1"/>
</dbReference>
<dbReference type="SUPFAM" id="SSF55239">
    <property type="entry name" value="RuBisCO, small subunit"/>
    <property type="match status" value="1"/>
</dbReference>
<accession>Q760T4</accession>
<gene>
    <name evidence="1" type="primary">rbcS</name>
</gene>
<proteinExistence type="inferred from homology"/>
<name>RBS_PYRYE</name>
<comment type="function">
    <text evidence="1">RuBisCO catalyzes two reactions: the carboxylation of D-ribulose 1,5-bisphosphate, the primary event in carbon dioxide fixation, as well as the oxidative fragmentation of the pentose substrate in the photorespiration process. Both reactions occur simultaneously and in competition at the same active site. Although the small subunit is not catalytic it is essential for maximal activity.</text>
</comment>
<comment type="subunit">
    <text evidence="1">Heterohexadecamer of 8 large and 8 small subunits.</text>
</comment>
<comment type="subcellular location">
    <subcellularLocation>
        <location evidence="1">Plastid</location>
        <location evidence="1">Chloroplast</location>
    </subcellularLocation>
</comment>
<comment type="miscellaneous">
    <text>In this alga, in contrast to plants, the small subunit is encoded in the chloroplast.</text>
</comment>
<comment type="miscellaneous">
    <text evidence="1">The basic functional RuBisCO is composed of a large chain homodimer in a 'head-to-tail' conformation. In form I RuBisCO this homodimer is arranged in a barrel-like tetramer with the small subunits forming a tetrameric 'cap' on each end of the 'barrel'.</text>
</comment>
<comment type="similarity">
    <text evidence="1">Belongs to the RuBisCO small chain family.</text>
</comment>
<keyword id="KW-0113">Calvin cycle</keyword>
<keyword id="KW-0120">Carbon dioxide fixation</keyword>
<keyword id="KW-0150">Chloroplast</keyword>
<keyword id="KW-0601">Photorespiration</keyword>
<keyword id="KW-0602">Photosynthesis</keyword>
<keyword id="KW-0934">Plastid</keyword>
<evidence type="ECO:0000255" key="1">
    <source>
        <dbReference type="HAMAP-Rule" id="MF_00859"/>
    </source>
</evidence>
<protein>
    <recommendedName>
        <fullName evidence="1">Ribulose bisphosphate carboxylase small subunit</fullName>
        <shortName evidence="1">RuBisCO small subunit</shortName>
    </recommendedName>
</protein>
<sequence>MRLTQGTFSFLPDLTDEQINKQLAYIVSKGLSANVEYTDDPHPRNSYWELWGLPLFDVKDASAVMYEISSCRKAKPNYYVKVNAFDNTRGIESCVMSFIVNRPANEPGFLLQRQDFEGRTMKYSLHSYATEKPEGARY</sequence>
<geneLocation type="chloroplast"/>